<reference key="1">
    <citation type="journal article" date="2007" name="J. Bacteriol.">
        <title>Genome sequence and analysis of the soil cellulolytic actinomycete Thermobifida fusca YX.</title>
        <authorList>
            <person name="Lykidis A."/>
            <person name="Mavromatis K."/>
            <person name="Ivanova N."/>
            <person name="Anderson I."/>
            <person name="Land M."/>
            <person name="DiBartolo G."/>
            <person name="Martinez M."/>
            <person name="Lapidus A."/>
            <person name="Lucas S."/>
            <person name="Copeland A."/>
            <person name="Richardson P."/>
            <person name="Wilson D.B."/>
            <person name="Kyrpides N."/>
        </authorList>
    </citation>
    <scope>NUCLEOTIDE SEQUENCE [LARGE SCALE GENOMIC DNA]</scope>
    <source>
        <strain>YX</strain>
    </source>
</reference>
<evidence type="ECO:0000250" key="1"/>
<evidence type="ECO:0000255" key="2">
    <source>
        <dbReference type="HAMAP-Rule" id="MF_00103"/>
    </source>
</evidence>
<organism>
    <name type="scientific">Thermobifida fusca (strain YX)</name>
    <dbReference type="NCBI Taxonomy" id="269800"/>
    <lineage>
        <taxon>Bacteria</taxon>
        <taxon>Bacillati</taxon>
        <taxon>Actinomycetota</taxon>
        <taxon>Actinomycetes</taxon>
        <taxon>Streptosporangiales</taxon>
        <taxon>Nocardiopsidaceae</taxon>
        <taxon>Thermobifida</taxon>
    </lineage>
</organism>
<dbReference type="EC" id="3.2.2.23" evidence="2"/>
<dbReference type="EC" id="4.2.99.18" evidence="2"/>
<dbReference type="EMBL" id="CP000088">
    <property type="protein sequence ID" value="AAZ54690.1"/>
    <property type="molecule type" value="Genomic_DNA"/>
</dbReference>
<dbReference type="RefSeq" id="WP_011291099.1">
    <property type="nucleotide sequence ID" value="NC_007333.1"/>
</dbReference>
<dbReference type="SMR" id="Q47S77"/>
<dbReference type="STRING" id="269800.Tfu_0652"/>
<dbReference type="KEGG" id="tfu:Tfu_0652"/>
<dbReference type="eggNOG" id="COG0266">
    <property type="taxonomic scope" value="Bacteria"/>
</dbReference>
<dbReference type="HOGENOM" id="CLU_038423_1_2_11"/>
<dbReference type="OrthoDB" id="9800855at2"/>
<dbReference type="GO" id="GO:0034039">
    <property type="term" value="F:8-oxo-7,8-dihydroguanine DNA N-glycosylase activity"/>
    <property type="evidence" value="ECO:0007669"/>
    <property type="project" value="TreeGrafter"/>
</dbReference>
<dbReference type="GO" id="GO:0140078">
    <property type="term" value="F:class I DNA-(apurinic or apyrimidinic site) endonuclease activity"/>
    <property type="evidence" value="ECO:0007669"/>
    <property type="project" value="UniProtKB-EC"/>
</dbReference>
<dbReference type="GO" id="GO:0003684">
    <property type="term" value="F:damaged DNA binding"/>
    <property type="evidence" value="ECO:0007669"/>
    <property type="project" value="InterPro"/>
</dbReference>
<dbReference type="GO" id="GO:0008270">
    <property type="term" value="F:zinc ion binding"/>
    <property type="evidence" value="ECO:0007669"/>
    <property type="project" value="UniProtKB-UniRule"/>
</dbReference>
<dbReference type="GO" id="GO:0006284">
    <property type="term" value="P:base-excision repair"/>
    <property type="evidence" value="ECO:0007669"/>
    <property type="project" value="InterPro"/>
</dbReference>
<dbReference type="CDD" id="cd08966">
    <property type="entry name" value="EcFpg-like_N"/>
    <property type="match status" value="1"/>
</dbReference>
<dbReference type="FunFam" id="1.10.8.50:FF:000003">
    <property type="entry name" value="Formamidopyrimidine-DNA glycosylase"/>
    <property type="match status" value="1"/>
</dbReference>
<dbReference type="Gene3D" id="1.10.8.50">
    <property type="match status" value="1"/>
</dbReference>
<dbReference type="Gene3D" id="3.20.190.10">
    <property type="entry name" value="MutM-like, N-terminal"/>
    <property type="match status" value="1"/>
</dbReference>
<dbReference type="HAMAP" id="MF_00103">
    <property type="entry name" value="Fapy_DNA_glycosyl"/>
    <property type="match status" value="1"/>
</dbReference>
<dbReference type="InterPro" id="IPR015886">
    <property type="entry name" value="DNA_glyclase/AP_lyase_DNA-bd"/>
</dbReference>
<dbReference type="InterPro" id="IPR020629">
    <property type="entry name" value="Formamido-pyr_DNA_Glyclase"/>
</dbReference>
<dbReference type="InterPro" id="IPR012319">
    <property type="entry name" value="FPG_cat"/>
</dbReference>
<dbReference type="InterPro" id="IPR035937">
    <property type="entry name" value="MutM-like_N-ter"/>
</dbReference>
<dbReference type="InterPro" id="IPR010979">
    <property type="entry name" value="Ribosomal_uS13-like_H2TH"/>
</dbReference>
<dbReference type="InterPro" id="IPR000214">
    <property type="entry name" value="Znf_DNA_glyclase/AP_lyase"/>
</dbReference>
<dbReference type="InterPro" id="IPR010663">
    <property type="entry name" value="Znf_FPG/IleRS"/>
</dbReference>
<dbReference type="NCBIfam" id="TIGR00577">
    <property type="entry name" value="fpg"/>
    <property type="match status" value="1"/>
</dbReference>
<dbReference type="NCBIfam" id="NF002211">
    <property type="entry name" value="PRK01103.1"/>
    <property type="match status" value="1"/>
</dbReference>
<dbReference type="PANTHER" id="PTHR22993">
    <property type="entry name" value="FORMAMIDOPYRIMIDINE-DNA GLYCOSYLASE"/>
    <property type="match status" value="1"/>
</dbReference>
<dbReference type="PANTHER" id="PTHR22993:SF9">
    <property type="entry name" value="FORMAMIDOPYRIMIDINE-DNA GLYCOSYLASE"/>
    <property type="match status" value="1"/>
</dbReference>
<dbReference type="Pfam" id="PF01149">
    <property type="entry name" value="Fapy_DNA_glyco"/>
    <property type="match status" value="1"/>
</dbReference>
<dbReference type="Pfam" id="PF06831">
    <property type="entry name" value="H2TH"/>
    <property type="match status" value="1"/>
</dbReference>
<dbReference type="Pfam" id="PF06827">
    <property type="entry name" value="zf-FPG_IleRS"/>
    <property type="match status" value="1"/>
</dbReference>
<dbReference type="SMART" id="SM00898">
    <property type="entry name" value="Fapy_DNA_glyco"/>
    <property type="match status" value="1"/>
</dbReference>
<dbReference type="SMART" id="SM01232">
    <property type="entry name" value="H2TH"/>
    <property type="match status" value="1"/>
</dbReference>
<dbReference type="SUPFAM" id="SSF57716">
    <property type="entry name" value="Glucocorticoid receptor-like (DNA-binding domain)"/>
    <property type="match status" value="1"/>
</dbReference>
<dbReference type="SUPFAM" id="SSF81624">
    <property type="entry name" value="N-terminal domain of MutM-like DNA repair proteins"/>
    <property type="match status" value="1"/>
</dbReference>
<dbReference type="SUPFAM" id="SSF46946">
    <property type="entry name" value="S13-like H2TH domain"/>
    <property type="match status" value="1"/>
</dbReference>
<dbReference type="PROSITE" id="PS51068">
    <property type="entry name" value="FPG_CAT"/>
    <property type="match status" value="1"/>
</dbReference>
<dbReference type="PROSITE" id="PS51066">
    <property type="entry name" value="ZF_FPG_2"/>
    <property type="match status" value="1"/>
</dbReference>
<name>FPG_THEFY</name>
<comment type="function">
    <text evidence="2">Involved in base excision repair of DNA damaged by oxidation or by mutagenic agents. Acts as a DNA glycosylase that recognizes and removes damaged bases. Has a preference for oxidized purines, such as 7,8-dihydro-8-oxoguanine (8-oxoG). Has AP (apurinic/apyrimidinic) lyase activity and introduces nicks in the DNA strand. Cleaves the DNA backbone by beta-delta elimination to generate a single-strand break at the site of the removed base with both 3'- and 5'-phosphates.</text>
</comment>
<comment type="catalytic activity">
    <reaction evidence="2">
        <text>Hydrolysis of DNA containing ring-opened 7-methylguanine residues, releasing 2,6-diamino-4-hydroxy-5-(N-methyl)formamidopyrimidine.</text>
        <dbReference type="EC" id="3.2.2.23"/>
    </reaction>
</comment>
<comment type="catalytic activity">
    <reaction evidence="2">
        <text>2'-deoxyribonucleotide-(2'-deoxyribose 5'-phosphate)-2'-deoxyribonucleotide-DNA = a 3'-end 2'-deoxyribonucleotide-(2,3-dehydro-2,3-deoxyribose 5'-phosphate)-DNA + a 5'-end 5'-phospho-2'-deoxyribonucleoside-DNA + H(+)</text>
        <dbReference type="Rhea" id="RHEA:66592"/>
        <dbReference type="Rhea" id="RHEA-COMP:13180"/>
        <dbReference type="Rhea" id="RHEA-COMP:16897"/>
        <dbReference type="Rhea" id="RHEA-COMP:17067"/>
        <dbReference type="ChEBI" id="CHEBI:15378"/>
        <dbReference type="ChEBI" id="CHEBI:136412"/>
        <dbReference type="ChEBI" id="CHEBI:157695"/>
        <dbReference type="ChEBI" id="CHEBI:167181"/>
        <dbReference type="EC" id="4.2.99.18"/>
    </reaction>
</comment>
<comment type="cofactor">
    <cofactor evidence="2">
        <name>Zn(2+)</name>
        <dbReference type="ChEBI" id="CHEBI:29105"/>
    </cofactor>
    <text evidence="2">Binds 1 zinc ion per subunit.</text>
</comment>
<comment type="subunit">
    <text evidence="2">Monomer.</text>
</comment>
<comment type="similarity">
    <text evidence="2">Belongs to the FPG family.</text>
</comment>
<keyword id="KW-0227">DNA damage</keyword>
<keyword id="KW-0234">DNA repair</keyword>
<keyword id="KW-0238">DNA-binding</keyword>
<keyword id="KW-0326">Glycosidase</keyword>
<keyword id="KW-0378">Hydrolase</keyword>
<keyword id="KW-0456">Lyase</keyword>
<keyword id="KW-0479">Metal-binding</keyword>
<keyword id="KW-0511">Multifunctional enzyme</keyword>
<keyword id="KW-0862">Zinc</keyword>
<keyword id="KW-0863">Zinc-finger</keyword>
<protein>
    <recommendedName>
        <fullName evidence="2">Formamidopyrimidine-DNA glycosylase</fullName>
        <shortName evidence="2">Fapy-DNA glycosylase</shortName>
        <ecNumber evidence="2">3.2.2.23</ecNumber>
    </recommendedName>
    <alternativeName>
        <fullName evidence="2">DNA-(apurinic or apyrimidinic site) lyase MutM</fullName>
        <shortName evidence="2">AP lyase MutM</shortName>
        <ecNumber evidence="2">4.2.99.18</ecNumber>
    </alternativeName>
</protein>
<gene>
    <name evidence="2" type="primary">mutM</name>
    <name evidence="2" type="synonym">fpg</name>
    <name type="ordered locus">Tfu_0652</name>
</gene>
<accession>Q47S77</accession>
<proteinExistence type="inferred from homology"/>
<sequence>MPELPEVEVVRRGLEKWVVGASFGEVEVLHPRAVRRHAPGAADFAARVSGCGVTEARRRGKYLWLTLDSGEALLAHLGMSGQLLVQPRHAAAERHLRVRLPLTARQGHDPEAPQELRFVDQRTFGHLLVDRLVDDGTGTGLPSVISHIARDPLDPAFDEDAFAAALCRKRTELKRALLDQSLISGIGNIYADEALWMSQLHWATPTEALSRSQVATLLAAVREVMVAALAQGGTSFDSLYVNVNGESGYFARSLNAYGRNDQPCARCGTPIQRETFMNRSSYSCPRCQPRPRHARA</sequence>
<feature type="initiator methionine" description="Removed" evidence="1">
    <location>
        <position position="1"/>
    </location>
</feature>
<feature type="chain" id="PRO_0000228478" description="Formamidopyrimidine-DNA glycosylase">
    <location>
        <begin position="2"/>
        <end position="296"/>
    </location>
</feature>
<feature type="zinc finger region" description="FPG-type" evidence="2">
    <location>
        <begin position="255"/>
        <end position="289"/>
    </location>
</feature>
<feature type="active site" description="Schiff-base intermediate with DNA" evidence="2">
    <location>
        <position position="2"/>
    </location>
</feature>
<feature type="active site" description="Proton donor" evidence="2">
    <location>
        <position position="3"/>
    </location>
</feature>
<feature type="active site" description="Proton donor; for beta-elimination activity" evidence="2">
    <location>
        <position position="61"/>
    </location>
</feature>
<feature type="active site" description="Proton donor; for delta-elimination activity" evidence="2">
    <location>
        <position position="279"/>
    </location>
</feature>
<feature type="binding site" evidence="2">
    <location>
        <position position="95"/>
    </location>
    <ligand>
        <name>DNA</name>
        <dbReference type="ChEBI" id="CHEBI:16991"/>
    </ligand>
</feature>
<feature type="binding site" evidence="2">
    <location>
        <position position="122"/>
    </location>
    <ligand>
        <name>DNA</name>
        <dbReference type="ChEBI" id="CHEBI:16991"/>
    </ligand>
</feature>
<feature type="binding site" evidence="2">
    <location>
        <position position="169"/>
    </location>
    <ligand>
        <name>DNA</name>
        <dbReference type="ChEBI" id="CHEBI:16991"/>
    </ligand>
</feature>